<dbReference type="EMBL" id="AJ965256">
    <property type="protein sequence ID" value="CAI83407.1"/>
    <property type="molecule type" value="Genomic_DNA"/>
</dbReference>
<dbReference type="RefSeq" id="WP_011309758.1">
    <property type="nucleotide sequence ID" value="NC_007356.1"/>
</dbReference>
<dbReference type="SMR" id="Q3ZYV1"/>
<dbReference type="KEGG" id="deh:cbdbA1358"/>
<dbReference type="HOGENOM" id="CLU_005965_0_0_0"/>
<dbReference type="Proteomes" id="UP000000433">
    <property type="component" value="Chromosome"/>
</dbReference>
<dbReference type="GO" id="GO:0005524">
    <property type="term" value="F:ATP binding"/>
    <property type="evidence" value="ECO:0007669"/>
    <property type="project" value="UniProtKB-UniRule"/>
</dbReference>
<dbReference type="GO" id="GO:0140662">
    <property type="term" value="F:ATP-dependent protein folding chaperone"/>
    <property type="evidence" value="ECO:0007669"/>
    <property type="project" value="InterPro"/>
</dbReference>
<dbReference type="GO" id="GO:0051082">
    <property type="term" value="F:unfolded protein binding"/>
    <property type="evidence" value="ECO:0007669"/>
    <property type="project" value="InterPro"/>
</dbReference>
<dbReference type="CDD" id="cd10234">
    <property type="entry name" value="ASKHA_NBD_HSP70_DnaK-like"/>
    <property type="match status" value="1"/>
</dbReference>
<dbReference type="FunFam" id="2.60.34.10:FF:000014">
    <property type="entry name" value="Chaperone protein DnaK HSP70"/>
    <property type="match status" value="1"/>
</dbReference>
<dbReference type="FunFam" id="1.20.1270.10:FF:000001">
    <property type="entry name" value="Molecular chaperone DnaK"/>
    <property type="match status" value="1"/>
</dbReference>
<dbReference type="FunFam" id="3.30.420.40:FF:000004">
    <property type="entry name" value="Molecular chaperone DnaK"/>
    <property type="match status" value="1"/>
</dbReference>
<dbReference type="FunFam" id="3.90.640.10:FF:000003">
    <property type="entry name" value="Molecular chaperone DnaK"/>
    <property type="match status" value="1"/>
</dbReference>
<dbReference type="Gene3D" id="1.20.1270.10">
    <property type="match status" value="1"/>
</dbReference>
<dbReference type="Gene3D" id="3.30.420.40">
    <property type="match status" value="2"/>
</dbReference>
<dbReference type="Gene3D" id="3.90.640.10">
    <property type="entry name" value="Actin, Chain A, domain 4"/>
    <property type="match status" value="1"/>
</dbReference>
<dbReference type="Gene3D" id="2.60.34.10">
    <property type="entry name" value="Substrate Binding Domain Of DNAk, Chain A, domain 1"/>
    <property type="match status" value="1"/>
</dbReference>
<dbReference type="HAMAP" id="MF_00332">
    <property type="entry name" value="DnaK"/>
    <property type="match status" value="1"/>
</dbReference>
<dbReference type="InterPro" id="IPR043129">
    <property type="entry name" value="ATPase_NBD"/>
</dbReference>
<dbReference type="InterPro" id="IPR012725">
    <property type="entry name" value="Chaperone_DnaK"/>
</dbReference>
<dbReference type="InterPro" id="IPR018181">
    <property type="entry name" value="Heat_shock_70_CS"/>
</dbReference>
<dbReference type="InterPro" id="IPR029048">
    <property type="entry name" value="HSP70_C_sf"/>
</dbReference>
<dbReference type="InterPro" id="IPR029047">
    <property type="entry name" value="HSP70_peptide-bd_sf"/>
</dbReference>
<dbReference type="InterPro" id="IPR013126">
    <property type="entry name" value="Hsp_70_fam"/>
</dbReference>
<dbReference type="NCBIfam" id="NF001413">
    <property type="entry name" value="PRK00290.1"/>
    <property type="match status" value="1"/>
</dbReference>
<dbReference type="NCBIfam" id="NF003520">
    <property type="entry name" value="PRK05183.1"/>
    <property type="match status" value="1"/>
</dbReference>
<dbReference type="NCBIfam" id="TIGR02350">
    <property type="entry name" value="prok_dnaK"/>
    <property type="match status" value="1"/>
</dbReference>
<dbReference type="PANTHER" id="PTHR19375">
    <property type="entry name" value="HEAT SHOCK PROTEIN 70KDA"/>
    <property type="match status" value="1"/>
</dbReference>
<dbReference type="Pfam" id="PF00012">
    <property type="entry name" value="HSP70"/>
    <property type="match status" value="1"/>
</dbReference>
<dbReference type="PRINTS" id="PR00301">
    <property type="entry name" value="HEATSHOCK70"/>
</dbReference>
<dbReference type="SUPFAM" id="SSF53067">
    <property type="entry name" value="Actin-like ATPase domain"/>
    <property type="match status" value="2"/>
</dbReference>
<dbReference type="SUPFAM" id="SSF100920">
    <property type="entry name" value="Heat shock protein 70kD (HSP70), peptide-binding domain"/>
    <property type="match status" value="1"/>
</dbReference>
<dbReference type="PROSITE" id="PS00297">
    <property type="entry name" value="HSP70_1"/>
    <property type="match status" value="1"/>
</dbReference>
<dbReference type="PROSITE" id="PS00329">
    <property type="entry name" value="HSP70_2"/>
    <property type="match status" value="1"/>
</dbReference>
<dbReference type="PROSITE" id="PS01036">
    <property type="entry name" value="HSP70_3"/>
    <property type="match status" value="1"/>
</dbReference>
<accession>Q3ZYV1</accession>
<comment type="function">
    <text evidence="1">Acts as a chaperone.</text>
</comment>
<comment type="induction">
    <text evidence="1">By stress conditions e.g. heat shock.</text>
</comment>
<comment type="similarity">
    <text evidence="1">Belongs to the heat shock protein 70 family.</text>
</comment>
<gene>
    <name evidence="1" type="primary">dnaK</name>
    <name type="ordered locus">cbdbA1358</name>
</gene>
<proteinExistence type="inferred from homology"/>
<feature type="chain" id="PRO_0000225957" description="Chaperone protein DnaK">
    <location>
        <begin position="1"/>
        <end position="636"/>
    </location>
</feature>
<feature type="region of interest" description="Disordered" evidence="2">
    <location>
        <begin position="602"/>
        <end position="636"/>
    </location>
</feature>
<feature type="compositionally biased region" description="Basic and acidic residues" evidence="2">
    <location>
        <begin position="618"/>
        <end position="636"/>
    </location>
</feature>
<feature type="modified residue" description="Phosphothreonine; by autocatalysis" evidence="1">
    <location>
        <position position="203"/>
    </location>
</feature>
<evidence type="ECO:0000255" key="1">
    <source>
        <dbReference type="HAMAP-Rule" id="MF_00332"/>
    </source>
</evidence>
<evidence type="ECO:0000256" key="2">
    <source>
        <dbReference type="SAM" id="MobiDB-lite"/>
    </source>
</evidence>
<name>DNAK_DEHMC</name>
<protein>
    <recommendedName>
        <fullName evidence="1">Chaperone protein DnaK</fullName>
    </recommendedName>
    <alternativeName>
        <fullName evidence="1">HSP70</fullName>
    </alternativeName>
    <alternativeName>
        <fullName evidence="1">Heat shock 70 kDa protein</fullName>
    </alternativeName>
    <alternativeName>
        <fullName evidence="1">Heat shock protein 70</fullName>
    </alternativeName>
</protein>
<keyword id="KW-0067">ATP-binding</keyword>
<keyword id="KW-0143">Chaperone</keyword>
<keyword id="KW-0547">Nucleotide-binding</keyword>
<keyword id="KW-0597">Phosphoprotein</keyword>
<keyword id="KW-0346">Stress response</keyword>
<organism>
    <name type="scientific">Dehalococcoides mccartyi (strain CBDB1)</name>
    <dbReference type="NCBI Taxonomy" id="255470"/>
    <lineage>
        <taxon>Bacteria</taxon>
        <taxon>Bacillati</taxon>
        <taxon>Chloroflexota</taxon>
        <taxon>Dehalococcoidia</taxon>
        <taxon>Dehalococcoidales</taxon>
        <taxon>Dehalococcoidaceae</taxon>
        <taxon>Dehalococcoides</taxon>
    </lineage>
</organism>
<reference key="1">
    <citation type="journal article" date="2005" name="Nat. Biotechnol.">
        <title>Genome sequence of the chlorinated compound-respiring bacterium Dehalococcoides species strain CBDB1.</title>
        <authorList>
            <person name="Kube M."/>
            <person name="Beck A."/>
            <person name="Zinder S.H."/>
            <person name="Kuhl H."/>
            <person name="Reinhardt R."/>
            <person name="Adrian L."/>
        </authorList>
    </citation>
    <scope>NUCLEOTIDE SEQUENCE [LARGE SCALE GENOMIC DNA]</scope>
    <source>
        <strain>CBDB1</strain>
    </source>
</reference>
<sequence length="636" mass="68519">MGKVVGIDLGTTNSEVAVMQGGEPVVIPSAEGSTLIPSVVAINKNGERIVGRQAKNQAILNPENTVYSIKRFMGRKWGEPAGRELPVEADAKRKPYKVIQGNNNEVRVVMGDKDFSPPEVSAMILQKLKSDAEAYLGEKVTEAVITVPAYFNDAQRQATKDAGAIAGLKVLRIINEPTAAALAYGLDKKKDETIAVYDLGGGTFDISILELGEGTFQVKSTAGDTHLGGDDFDQKIIDWLIAEYKKDQGIDLSKDKTALQRLKEAAEKAKIELSTVQQTEINLPFITADASGPKHLNIILTRSKLEQMVMDLVEKSLEPCRQALKDSGKTSAEINEVILVGGQTRMPLVQQKVKDFFGKEPNKGVNPDEVVAIGAAIQAGVLKGEVSDVLLLDVIPLTLGIETLGGVSTALITRNTTIPTSKSQVFSTAADNQPSVEIHVLQGERPMAADNRTLGRFMLDGILPAPRGVPQIEVTFDIDANGMLSVKAKDKGTGREQKITITASSGLSKEEVEKMTREAEAHAVEDTKRKEEIEARNVADNLAYNAEKTLRDNKDKIPAELNTELESKIAAVRTALQGNDVEAIKKTTQELSTALQSVGSAVYGKQQEGAPAQEEPSAEGKKADDEGTVEGEFREV</sequence>